<dbReference type="EC" id="2.1.3.3" evidence="2"/>
<dbReference type="EMBL" id="CP000431">
    <property type="protein sequence ID" value="ABG92780.1"/>
    <property type="molecule type" value="Genomic_DNA"/>
</dbReference>
<dbReference type="RefSeq" id="WP_009473616.1">
    <property type="nucleotide sequence ID" value="NC_008268.1"/>
</dbReference>
<dbReference type="SMR" id="Q0SI56"/>
<dbReference type="KEGG" id="rha:RHA1_ro00952"/>
<dbReference type="eggNOG" id="COG0078">
    <property type="taxonomic scope" value="Bacteria"/>
</dbReference>
<dbReference type="HOGENOM" id="CLU_043846_3_2_11"/>
<dbReference type="OrthoDB" id="9802587at2"/>
<dbReference type="UniPathway" id="UPA00068">
    <property type="reaction ID" value="UER00112"/>
</dbReference>
<dbReference type="Proteomes" id="UP000008710">
    <property type="component" value="Chromosome"/>
</dbReference>
<dbReference type="GO" id="GO:0005737">
    <property type="term" value="C:cytoplasm"/>
    <property type="evidence" value="ECO:0007669"/>
    <property type="project" value="UniProtKB-SubCell"/>
</dbReference>
<dbReference type="GO" id="GO:0016597">
    <property type="term" value="F:amino acid binding"/>
    <property type="evidence" value="ECO:0007669"/>
    <property type="project" value="InterPro"/>
</dbReference>
<dbReference type="GO" id="GO:0004585">
    <property type="term" value="F:ornithine carbamoyltransferase activity"/>
    <property type="evidence" value="ECO:0007669"/>
    <property type="project" value="UniProtKB-UniRule"/>
</dbReference>
<dbReference type="GO" id="GO:0042450">
    <property type="term" value="P:arginine biosynthetic process via ornithine"/>
    <property type="evidence" value="ECO:0007669"/>
    <property type="project" value="TreeGrafter"/>
</dbReference>
<dbReference type="GO" id="GO:0019240">
    <property type="term" value="P:citrulline biosynthetic process"/>
    <property type="evidence" value="ECO:0007669"/>
    <property type="project" value="TreeGrafter"/>
</dbReference>
<dbReference type="GO" id="GO:0006526">
    <property type="term" value="P:L-arginine biosynthetic process"/>
    <property type="evidence" value="ECO:0007669"/>
    <property type="project" value="UniProtKB-UniRule"/>
</dbReference>
<dbReference type="FunFam" id="3.40.50.1370:FF:000008">
    <property type="entry name" value="Ornithine carbamoyltransferase"/>
    <property type="match status" value="1"/>
</dbReference>
<dbReference type="Gene3D" id="3.40.50.1370">
    <property type="entry name" value="Aspartate/ornithine carbamoyltransferase"/>
    <property type="match status" value="2"/>
</dbReference>
<dbReference type="HAMAP" id="MF_01109">
    <property type="entry name" value="OTCase"/>
    <property type="match status" value="1"/>
</dbReference>
<dbReference type="InterPro" id="IPR006132">
    <property type="entry name" value="Asp/Orn_carbamoyltranf_P-bd"/>
</dbReference>
<dbReference type="InterPro" id="IPR006130">
    <property type="entry name" value="Asp/Orn_carbamoylTrfase"/>
</dbReference>
<dbReference type="InterPro" id="IPR036901">
    <property type="entry name" value="Asp/Orn_carbamoylTrfase_sf"/>
</dbReference>
<dbReference type="InterPro" id="IPR006131">
    <property type="entry name" value="Asp_carbamoyltransf_Asp/Orn-bd"/>
</dbReference>
<dbReference type="InterPro" id="IPR002292">
    <property type="entry name" value="Orn/put_carbamltrans"/>
</dbReference>
<dbReference type="InterPro" id="IPR024904">
    <property type="entry name" value="OTCase_ArgI"/>
</dbReference>
<dbReference type="NCBIfam" id="TIGR00658">
    <property type="entry name" value="orni_carb_tr"/>
    <property type="match status" value="1"/>
</dbReference>
<dbReference type="NCBIfam" id="NF001986">
    <property type="entry name" value="PRK00779.1"/>
    <property type="match status" value="1"/>
</dbReference>
<dbReference type="PANTHER" id="PTHR45753">
    <property type="entry name" value="ORNITHINE CARBAMOYLTRANSFERASE, MITOCHONDRIAL"/>
    <property type="match status" value="1"/>
</dbReference>
<dbReference type="PANTHER" id="PTHR45753:SF3">
    <property type="entry name" value="ORNITHINE TRANSCARBAMYLASE, MITOCHONDRIAL"/>
    <property type="match status" value="1"/>
</dbReference>
<dbReference type="Pfam" id="PF00185">
    <property type="entry name" value="OTCace"/>
    <property type="match status" value="1"/>
</dbReference>
<dbReference type="Pfam" id="PF02729">
    <property type="entry name" value="OTCace_N"/>
    <property type="match status" value="1"/>
</dbReference>
<dbReference type="PRINTS" id="PR00100">
    <property type="entry name" value="AOTCASE"/>
</dbReference>
<dbReference type="PRINTS" id="PR00102">
    <property type="entry name" value="OTCASE"/>
</dbReference>
<dbReference type="SUPFAM" id="SSF53671">
    <property type="entry name" value="Aspartate/ornithine carbamoyltransferase"/>
    <property type="match status" value="1"/>
</dbReference>
<dbReference type="PROSITE" id="PS00097">
    <property type="entry name" value="CARBAMOYLTRANSFERASE"/>
    <property type="match status" value="1"/>
</dbReference>
<name>OTC_RHOJR</name>
<comment type="function">
    <text evidence="1">Reversibly catalyzes the transfer of the carbamoyl group from carbamoyl phosphate (CP) to the N(epsilon) atom of ornithine (ORN) to produce L-citrulline.</text>
</comment>
<comment type="catalytic activity">
    <reaction evidence="2">
        <text>carbamoyl phosphate + L-ornithine = L-citrulline + phosphate + H(+)</text>
        <dbReference type="Rhea" id="RHEA:19513"/>
        <dbReference type="ChEBI" id="CHEBI:15378"/>
        <dbReference type="ChEBI" id="CHEBI:43474"/>
        <dbReference type="ChEBI" id="CHEBI:46911"/>
        <dbReference type="ChEBI" id="CHEBI:57743"/>
        <dbReference type="ChEBI" id="CHEBI:58228"/>
        <dbReference type="EC" id="2.1.3.3"/>
    </reaction>
</comment>
<comment type="pathway">
    <text evidence="2">Amino-acid biosynthesis; L-arginine biosynthesis; L-arginine from L-ornithine and carbamoyl phosphate: step 1/3.</text>
</comment>
<comment type="subcellular location">
    <subcellularLocation>
        <location evidence="2">Cytoplasm</location>
    </subcellularLocation>
</comment>
<comment type="similarity">
    <text evidence="2">Belongs to the aspartate/ornithine carbamoyltransferase superfamily. OTCase family.</text>
</comment>
<sequence length="315" mass="33977">MTTVVKHFLRDDDLTPAQQAEVLELAARLKKAPFAERPLEGPRGVGVIFEKNSTRTRFSFEMGIAQLGGHAIVVDGRSTQLGREETLQDTGRVLSRYVDAVVWRTFGQKRLEAMASGADVPIVNALSDEFHPCQVLADLQTLVERKGSLKGLKLTYLGDGANNMAHSLMLGGVTAGVDVTIASPEGFAPLPWVVEAARARAAETGATITLTGDPQTAVVGADALVTDTWTSMGQENDGLDRVGPFRPFQINEALLAKADADAVVLHCLPAHRGEEITDEVLDGPQSVVWDEAENRLHAQKALLVWLLAQRTGDRP</sequence>
<protein>
    <recommendedName>
        <fullName evidence="2">Ornithine carbamoyltransferase</fullName>
        <shortName evidence="2">OTCase</shortName>
        <ecNumber evidence="2">2.1.3.3</ecNumber>
    </recommendedName>
</protein>
<organism>
    <name type="scientific">Rhodococcus jostii (strain RHA1)</name>
    <dbReference type="NCBI Taxonomy" id="101510"/>
    <lineage>
        <taxon>Bacteria</taxon>
        <taxon>Bacillati</taxon>
        <taxon>Actinomycetota</taxon>
        <taxon>Actinomycetes</taxon>
        <taxon>Mycobacteriales</taxon>
        <taxon>Nocardiaceae</taxon>
        <taxon>Rhodococcus</taxon>
    </lineage>
</organism>
<reference key="1">
    <citation type="journal article" date="2006" name="Proc. Natl. Acad. Sci. U.S.A.">
        <title>The complete genome of Rhodococcus sp. RHA1 provides insights into a catabolic powerhouse.</title>
        <authorList>
            <person name="McLeod M.P."/>
            <person name="Warren R.L."/>
            <person name="Hsiao W.W.L."/>
            <person name="Araki N."/>
            <person name="Myhre M."/>
            <person name="Fernandes C."/>
            <person name="Miyazawa D."/>
            <person name="Wong W."/>
            <person name="Lillquist A.L."/>
            <person name="Wang D."/>
            <person name="Dosanjh M."/>
            <person name="Hara H."/>
            <person name="Petrescu A."/>
            <person name="Morin R.D."/>
            <person name="Yang G."/>
            <person name="Stott J.M."/>
            <person name="Schein J.E."/>
            <person name="Shin H."/>
            <person name="Smailus D."/>
            <person name="Siddiqui A.S."/>
            <person name="Marra M.A."/>
            <person name="Jones S.J.M."/>
            <person name="Holt R."/>
            <person name="Brinkman F.S.L."/>
            <person name="Miyauchi K."/>
            <person name="Fukuda M."/>
            <person name="Davies J.E."/>
            <person name="Mohn W.W."/>
            <person name="Eltis L.D."/>
        </authorList>
    </citation>
    <scope>NUCLEOTIDE SEQUENCE [LARGE SCALE GENOMIC DNA]</scope>
    <source>
        <strain>RHA1</strain>
    </source>
</reference>
<feature type="chain" id="PRO_1000137103" description="Ornithine carbamoyltransferase">
    <location>
        <begin position="1"/>
        <end position="315"/>
    </location>
</feature>
<feature type="binding site" evidence="2">
    <location>
        <begin position="53"/>
        <end position="56"/>
    </location>
    <ligand>
        <name>carbamoyl phosphate</name>
        <dbReference type="ChEBI" id="CHEBI:58228"/>
    </ligand>
</feature>
<feature type="binding site" evidence="2">
    <location>
        <position position="80"/>
    </location>
    <ligand>
        <name>carbamoyl phosphate</name>
        <dbReference type="ChEBI" id="CHEBI:58228"/>
    </ligand>
</feature>
<feature type="binding site" evidence="2">
    <location>
        <position position="104"/>
    </location>
    <ligand>
        <name>carbamoyl phosphate</name>
        <dbReference type="ChEBI" id="CHEBI:58228"/>
    </ligand>
</feature>
<feature type="binding site" evidence="2">
    <location>
        <begin position="131"/>
        <end position="134"/>
    </location>
    <ligand>
        <name>carbamoyl phosphate</name>
        <dbReference type="ChEBI" id="CHEBI:58228"/>
    </ligand>
</feature>
<feature type="binding site" evidence="2">
    <location>
        <position position="163"/>
    </location>
    <ligand>
        <name>L-ornithine</name>
        <dbReference type="ChEBI" id="CHEBI:46911"/>
    </ligand>
</feature>
<feature type="binding site" evidence="2">
    <location>
        <position position="227"/>
    </location>
    <ligand>
        <name>L-ornithine</name>
        <dbReference type="ChEBI" id="CHEBI:46911"/>
    </ligand>
</feature>
<feature type="binding site" evidence="2">
    <location>
        <begin position="231"/>
        <end position="232"/>
    </location>
    <ligand>
        <name>L-ornithine</name>
        <dbReference type="ChEBI" id="CHEBI:46911"/>
    </ligand>
</feature>
<feature type="binding site" evidence="2">
    <location>
        <begin position="267"/>
        <end position="268"/>
    </location>
    <ligand>
        <name>carbamoyl phosphate</name>
        <dbReference type="ChEBI" id="CHEBI:58228"/>
    </ligand>
</feature>
<feature type="binding site" evidence="2">
    <location>
        <position position="295"/>
    </location>
    <ligand>
        <name>carbamoyl phosphate</name>
        <dbReference type="ChEBI" id="CHEBI:58228"/>
    </ligand>
</feature>
<keyword id="KW-0028">Amino-acid biosynthesis</keyword>
<keyword id="KW-0055">Arginine biosynthesis</keyword>
<keyword id="KW-0963">Cytoplasm</keyword>
<keyword id="KW-0808">Transferase</keyword>
<evidence type="ECO:0000250" key="1"/>
<evidence type="ECO:0000255" key="2">
    <source>
        <dbReference type="HAMAP-Rule" id="MF_01109"/>
    </source>
</evidence>
<accession>Q0SI56</accession>
<proteinExistence type="inferred from homology"/>
<gene>
    <name evidence="2" type="primary">argF</name>
    <name type="ordered locus">RHA1_ro00952</name>
</gene>